<protein>
    <recommendedName>
        <fullName evidence="1">UPF0102 protein PA4424</fullName>
    </recommendedName>
</protein>
<organism>
    <name type="scientific">Pseudomonas aeruginosa (strain ATCC 15692 / DSM 22644 / CIP 104116 / JCM 14847 / LMG 12228 / 1C / PRS 101 / PAO1)</name>
    <dbReference type="NCBI Taxonomy" id="208964"/>
    <lineage>
        <taxon>Bacteria</taxon>
        <taxon>Pseudomonadati</taxon>
        <taxon>Pseudomonadota</taxon>
        <taxon>Gammaproteobacteria</taxon>
        <taxon>Pseudomonadales</taxon>
        <taxon>Pseudomonadaceae</taxon>
        <taxon>Pseudomonas</taxon>
    </lineage>
</organism>
<proteinExistence type="inferred from homology"/>
<dbReference type="EMBL" id="AE004091">
    <property type="protein sequence ID" value="AAG07812.1"/>
    <property type="molecule type" value="Genomic_DNA"/>
</dbReference>
<dbReference type="PIR" id="H83091">
    <property type="entry name" value="H83091"/>
</dbReference>
<dbReference type="RefSeq" id="NP_253114.1">
    <property type="nucleotide sequence ID" value="NC_002516.2"/>
</dbReference>
<dbReference type="RefSeq" id="WP_003110149.1">
    <property type="nucleotide sequence ID" value="NZ_QZGE01000004.1"/>
</dbReference>
<dbReference type="SMR" id="Q9HVZ1"/>
<dbReference type="FunCoup" id="Q9HVZ1">
    <property type="interactions" value="312"/>
</dbReference>
<dbReference type="STRING" id="208964.PA4424"/>
<dbReference type="PaxDb" id="208964-PA4424"/>
<dbReference type="DNASU" id="881195"/>
<dbReference type="GeneID" id="881195"/>
<dbReference type="KEGG" id="pae:PA4424"/>
<dbReference type="PATRIC" id="fig|208964.12.peg.4633"/>
<dbReference type="PseudoCAP" id="PA4424"/>
<dbReference type="HOGENOM" id="CLU_115353_1_0_6"/>
<dbReference type="InParanoid" id="Q9HVZ1"/>
<dbReference type="OrthoDB" id="9794876at2"/>
<dbReference type="PhylomeDB" id="Q9HVZ1"/>
<dbReference type="BioCyc" id="PAER208964:G1FZ6-4512-MONOMER"/>
<dbReference type="Proteomes" id="UP000002438">
    <property type="component" value="Chromosome"/>
</dbReference>
<dbReference type="GO" id="GO:0003676">
    <property type="term" value="F:nucleic acid binding"/>
    <property type="evidence" value="ECO:0007669"/>
    <property type="project" value="InterPro"/>
</dbReference>
<dbReference type="Gene3D" id="3.40.1350.10">
    <property type="match status" value="1"/>
</dbReference>
<dbReference type="HAMAP" id="MF_00048">
    <property type="entry name" value="UPF0102"/>
    <property type="match status" value="1"/>
</dbReference>
<dbReference type="InterPro" id="IPR011335">
    <property type="entry name" value="Restrct_endonuc-II-like"/>
</dbReference>
<dbReference type="InterPro" id="IPR011856">
    <property type="entry name" value="tRNA_endonuc-like_dom_sf"/>
</dbReference>
<dbReference type="InterPro" id="IPR003509">
    <property type="entry name" value="UPF0102_YraN-like"/>
</dbReference>
<dbReference type="NCBIfam" id="NF009150">
    <property type="entry name" value="PRK12497.1-3"/>
    <property type="match status" value="1"/>
</dbReference>
<dbReference type="NCBIfam" id="TIGR00252">
    <property type="entry name" value="YraN family protein"/>
    <property type="match status" value="1"/>
</dbReference>
<dbReference type="PANTHER" id="PTHR34039">
    <property type="entry name" value="UPF0102 PROTEIN YRAN"/>
    <property type="match status" value="1"/>
</dbReference>
<dbReference type="PANTHER" id="PTHR34039:SF1">
    <property type="entry name" value="UPF0102 PROTEIN YRAN"/>
    <property type="match status" value="1"/>
</dbReference>
<dbReference type="Pfam" id="PF02021">
    <property type="entry name" value="UPF0102"/>
    <property type="match status" value="1"/>
</dbReference>
<dbReference type="SUPFAM" id="SSF52980">
    <property type="entry name" value="Restriction endonuclease-like"/>
    <property type="match status" value="1"/>
</dbReference>
<name>Y4424_PSEAE</name>
<comment type="similarity">
    <text evidence="1">Belongs to the UPF0102 family.</text>
</comment>
<evidence type="ECO:0000255" key="1">
    <source>
        <dbReference type="HAMAP-Rule" id="MF_00048"/>
    </source>
</evidence>
<gene>
    <name type="ordered locus">PA4424</name>
</gene>
<reference key="1">
    <citation type="journal article" date="2000" name="Nature">
        <title>Complete genome sequence of Pseudomonas aeruginosa PAO1, an opportunistic pathogen.</title>
        <authorList>
            <person name="Stover C.K."/>
            <person name="Pham X.-Q.T."/>
            <person name="Erwin A.L."/>
            <person name="Mizoguchi S.D."/>
            <person name="Warrener P."/>
            <person name="Hickey M.J."/>
            <person name="Brinkman F.S.L."/>
            <person name="Hufnagle W.O."/>
            <person name="Kowalik D.J."/>
            <person name="Lagrou M."/>
            <person name="Garber R.L."/>
            <person name="Goltry L."/>
            <person name="Tolentino E."/>
            <person name="Westbrock-Wadman S."/>
            <person name="Yuan Y."/>
            <person name="Brody L.L."/>
            <person name="Coulter S.N."/>
            <person name="Folger K.R."/>
            <person name="Kas A."/>
            <person name="Larbig K."/>
            <person name="Lim R.M."/>
            <person name="Smith K.A."/>
            <person name="Spencer D.H."/>
            <person name="Wong G.K.-S."/>
            <person name="Wu Z."/>
            <person name="Paulsen I.T."/>
            <person name="Reizer J."/>
            <person name="Saier M.H. Jr."/>
            <person name="Hancock R.E.W."/>
            <person name="Lory S."/>
            <person name="Olson M.V."/>
        </authorList>
    </citation>
    <scope>NUCLEOTIDE SEQUENCE [LARGE SCALE GENOMIC DNA]</scope>
    <source>
        <strain>ATCC 15692 / DSM 22644 / CIP 104116 / JCM 14847 / LMG 12228 / 1C / PRS 101 / PAO1</strain>
    </source>
</reference>
<feature type="chain" id="PRO_0000167370" description="UPF0102 protein PA4424">
    <location>
        <begin position="1"/>
        <end position="125"/>
    </location>
</feature>
<sequence length="125" mass="14366">MTDRESSRDKGRQAEELACAHLRRQGLATLGKNWTCRRGELDLVMLDGDTVVFVEVRSRRHRAWGGALESIDARKRQRLILSAELFLQQEARWAKRPCRFDVVTVDTSDGQSPPRLDWIQNAFDA</sequence>
<accession>Q9HVZ1</accession>
<keyword id="KW-1185">Reference proteome</keyword>